<keyword id="KW-0010">Activator</keyword>
<keyword id="KW-0067">ATP-binding</keyword>
<keyword id="KW-0238">DNA-binding</keyword>
<keyword id="KW-0479">Metal-binding</keyword>
<keyword id="KW-0535">Nitrogen fixation</keyword>
<keyword id="KW-0547">Nucleotide-binding</keyword>
<keyword id="KW-1185">Reference proteome</keyword>
<keyword id="KW-0804">Transcription</keyword>
<keyword id="KW-0805">Transcription regulation</keyword>
<keyword id="KW-0902">Two-component regulatory system</keyword>
<organism>
    <name type="scientific">Azorhizobium caulinodans (strain ATCC 43989 / DSM 5975 / JCM 20966 / LMG 6465 / NBRC 14845 / NCIMB 13405 / ORS 571)</name>
    <dbReference type="NCBI Taxonomy" id="438753"/>
    <lineage>
        <taxon>Bacteria</taxon>
        <taxon>Pseudomonadati</taxon>
        <taxon>Pseudomonadota</taxon>
        <taxon>Alphaproteobacteria</taxon>
        <taxon>Hyphomicrobiales</taxon>
        <taxon>Xanthobacteraceae</taxon>
        <taxon>Azorhizobium</taxon>
    </lineage>
</organism>
<comment type="function">
    <text>Required for activation of most nif operons, which are directly involved in nitrogen fixation.</text>
</comment>
<comment type="subunit">
    <text>Interacts with sigma-54.</text>
</comment>
<comment type="induction">
    <text>NifA transcriptional activity seems to be controlled by both the general nitrogen regulatory (ntr) system and the O(2)-regulatory (FNR) system.</text>
</comment>
<comment type="sequence caution" evidence="4">
    <conflict type="erroneous initiation">
        <sequence resource="EMBL-CDS" id="CAA30816"/>
    </conflict>
</comment>
<comment type="sequence caution" evidence="4">
    <conflict type="erroneous initiation">
        <sequence resource="EMBL-CDS" id="CAA32837"/>
    </conflict>
</comment>
<proteinExistence type="evidence at transcript level"/>
<name>NIFA_AZOC5</name>
<reference key="1">
    <citation type="journal article" date="1989" name="Mol. Microbiol.">
        <title>The Azorhizobium caulinodans nitrogen-fixation regulatory gene, nifA, is controlled by the cellular nitrogen and oxygen status.</title>
        <authorList>
            <person name="Ratet P."/>
            <person name="Pawlowski K."/>
            <person name="Schell J."/>
            <person name="de Bruijn F.J."/>
        </authorList>
    </citation>
    <scope>NUCLEOTIDE SEQUENCE [GENOMIC DNA]</scope>
</reference>
<reference key="2">
    <citation type="journal article" date="1988" name="Nucleic Acids Res.">
        <title>The Azorhizobium caulinodans nifA gene: identification of upstream-activating sequences including a new element, the 'anaerobox'.</title>
        <authorList>
            <person name="Nees D.W."/>
            <person name="Stein P.A."/>
            <person name="Ludwig R.A."/>
        </authorList>
    </citation>
    <scope>NUCLEOTIDE SEQUENCE [GENOMIC DNA]</scope>
</reference>
<reference key="3">
    <citation type="submission" date="2007-04" db="EMBL/GenBank/DDBJ databases">
        <title>Complete genome sequence of the nitrogen-fixing bacterium Azorhizobium caulinodans ORS571.</title>
        <authorList>
            <person name="Lee K.B."/>
            <person name="Backer P.D."/>
            <person name="Aono T."/>
            <person name="Liu C.T."/>
            <person name="Suzuki S."/>
            <person name="Suzuki T."/>
            <person name="Kaneko T."/>
            <person name="Yamada M."/>
            <person name="Tabata S."/>
            <person name="Kupfer D.M."/>
            <person name="Najar F.Z."/>
            <person name="Wiley G.B."/>
            <person name="Roe B."/>
            <person name="Binnewies T."/>
            <person name="Ussery D."/>
            <person name="Vereecke D."/>
            <person name="Gevers D."/>
            <person name="Holsters M."/>
            <person name="Oyaizu H."/>
        </authorList>
    </citation>
    <scope>NUCLEOTIDE SEQUENCE [LARGE SCALE GENOMIC DNA]</scope>
    <source>
        <strain>ATCC 43989 / DSM 5975 / JCM 20966 / LMG 6465 / NBRC 14845 / NCIMB 13405 / ORS 571</strain>
    </source>
</reference>
<accession>P09133</accession>
<accession>A8HQP2</accession>
<evidence type="ECO:0000250" key="1"/>
<evidence type="ECO:0000250" key="2">
    <source>
        <dbReference type="UniProtKB" id="P05407"/>
    </source>
</evidence>
<evidence type="ECO:0000255" key="3">
    <source>
        <dbReference type="PROSITE-ProRule" id="PRU00193"/>
    </source>
</evidence>
<evidence type="ECO:0000305" key="4"/>
<dbReference type="EMBL" id="X14716">
    <property type="protein sequence ID" value="CAA32836.1"/>
    <property type="molecule type" value="Genomic_DNA"/>
</dbReference>
<dbReference type="EMBL" id="X14716">
    <property type="protein sequence ID" value="CAA32837.1"/>
    <property type="status" value="ALT_INIT"/>
    <property type="molecule type" value="Genomic_DNA"/>
</dbReference>
<dbReference type="EMBL" id="X08014">
    <property type="protein sequence ID" value="CAA30816.1"/>
    <property type="status" value="ALT_INIT"/>
    <property type="molecule type" value="Genomic_DNA"/>
</dbReference>
<dbReference type="EMBL" id="AP009384">
    <property type="protein sequence ID" value="BAF87047.1"/>
    <property type="molecule type" value="Genomic_DNA"/>
</dbReference>
<dbReference type="PIR" id="S06977">
    <property type="entry name" value="S06977"/>
</dbReference>
<dbReference type="SMR" id="P09133"/>
<dbReference type="STRING" id="438753.AZC_1049"/>
<dbReference type="KEGG" id="azc:AZC_1049"/>
<dbReference type="eggNOG" id="COG3604">
    <property type="taxonomic scope" value="Bacteria"/>
</dbReference>
<dbReference type="HOGENOM" id="CLU_000445_95_2_5"/>
<dbReference type="Proteomes" id="UP000000270">
    <property type="component" value="Chromosome"/>
</dbReference>
<dbReference type="GO" id="GO:0005524">
    <property type="term" value="F:ATP binding"/>
    <property type="evidence" value="ECO:0007669"/>
    <property type="project" value="UniProtKB-KW"/>
</dbReference>
<dbReference type="GO" id="GO:0016887">
    <property type="term" value="F:ATP hydrolysis activity"/>
    <property type="evidence" value="ECO:0007669"/>
    <property type="project" value="InterPro"/>
</dbReference>
<dbReference type="GO" id="GO:0003700">
    <property type="term" value="F:DNA-binding transcription factor activity"/>
    <property type="evidence" value="ECO:0007669"/>
    <property type="project" value="InterPro"/>
</dbReference>
<dbReference type="GO" id="GO:0046872">
    <property type="term" value="F:metal ion binding"/>
    <property type="evidence" value="ECO:0007669"/>
    <property type="project" value="UniProtKB-KW"/>
</dbReference>
<dbReference type="GO" id="GO:0043565">
    <property type="term" value="F:sequence-specific DNA binding"/>
    <property type="evidence" value="ECO:0007669"/>
    <property type="project" value="InterPro"/>
</dbReference>
<dbReference type="GO" id="GO:0009399">
    <property type="term" value="P:nitrogen fixation"/>
    <property type="evidence" value="ECO:0007669"/>
    <property type="project" value="UniProtKB-KW"/>
</dbReference>
<dbReference type="GO" id="GO:0000160">
    <property type="term" value="P:phosphorelay signal transduction system"/>
    <property type="evidence" value="ECO:0007669"/>
    <property type="project" value="UniProtKB-KW"/>
</dbReference>
<dbReference type="CDD" id="cd00009">
    <property type="entry name" value="AAA"/>
    <property type="match status" value="1"/>
</dbReference>
<dbReference type="FunFam" id="3.40.50.300:FF:000006">
    <property type="entry name" value="DNA-binding transcriptional regulator NtrC"/>
    <property type="match status" value="1"/>
</dbReference>
<dbReference type="Gene3D" id="1.10.8.60">
    <property type="match status" value="1"/>
</dbReference>
<dbReference type="Gene3D" id="3.30.450.40">
    <property type="match status" value="1"/>
</dbReference>
<dbReference type="Gene3D" id="1.10.10.60">
    <property type="entry name" value="Homeodomain-like"/>
    <property type="match status" value="1"/>
</dbReference>
<dbReference type="Gene3D" id="3.40.50.300">
    <property type="entry name" value="P-loop containing nucleotide triphosphate hydrolases"/>
    <property type="match status" value="1"/>
</dbReference>
<dbReference type="InterPro" id="IPR003593">
    <property type="entry name" value="AAA+_ATPase"/>
</dbReference>
<dbReference type="InterPro" id="IPR003018">
    <property type="entry name" value="GAF"/>
</dbReference>
<dbReference type="InterPro" id="IPR029016">
    <property type="entry name" value="GAF-like_dom_sf"/>
</dbReference>
<dbReference type="InterPro" id="IPR002197">
    <property type="entry name" value="HTH_Fis"/>
</dbReference>
<dbReference type="InterPro" id="IPR010113">
    <property type="entry name" value="Nif-specific_regulatory_prot"/>
</dbReference>
<dbReference type="InterPro" id="IPR027417">
    <property type="entry name" value="P-loop_NTPase"/>
</dbReference>
<dbReference type="InterPro" id="IPR002078">
    <property type="entry name" value="Sigma_54_int"/>
</dbReference>
<dbReference type="InterPro" id="IPR025662">
    <property type="entry name" value="Sigma_54_int_dom_ATP-bd_1"/>
</dbReference>
<dbReference type="InterPro" id="IPR025943">
    <property type="entry name" value="Sigma_54_int_dom_ATP-bd_2"/>
</dbReference>
<dbReference type="InterPro" id="IPR025944">
    <property type="entry name" value="Sigma_54_int_dom_CS"/>
</dbReference>
<dbReference type="NCBIfam" id="TIGR01817">
    <property type="entry name" value="nifA"/>
    <property type="match status" value="1"/>
</dbReference>
<dbReference type="PANTHER" id="PTHR32071:SF117">
    <property type="entry name" value="PTS-DEPENDENT DIHYDROXYACETONE KINASE OPERON REGULATORY PROTEIN-RELATED"/>
    <property type="match status" value="1"/>
</dbReference>
<dbReference type="PANTHER" id="PTHR32071">
    <property type="entry name" value="TRANSCRIPTIONAL REGULATORY PROTEIN"/>
    <property type="match status" value="1"/>
</dbReference>
<dbReference type="Pfam" id="PF01590">
    <property type="entry name" value="GAF"/>
    <property type="match status" value="1"/>
</dbReference>
<dbReference type="Pfam" id="PF02954">
    <property type="entry name" value="HTH_8"/>
    <property type="match status" value="1"/>
</dbReference>
<dbReference type="Pfam" id="PF00158">
    <property type="entry name" value="Sigma54_activat"/>
    <property type="match status" value="1"/>
</dbReference>
<dbReference type="PRINTS" id="PR01590">
    <property type="entry name" value="HTHFIS"/>
</dbReference>
<dbReference type="SMART" id="SM00382">
    <property type="entry name" value="AAA"/>
    <property type="match status" value="1"/>
</dbReference>
<dbReference type="SMART" id="SM00065">
    <property type="entry name" value="GAF"/>
    <property type="match status" value="1"/>
</dbReference>
<dbReference type="SUPFAM" id="SSF55781">
    <property type="entry name" value="GAF domain-like"/>
    <property type="match status" value="1"/>
</dbReference>
<dbReference type="SUPFAM" id="SSF52540">
    <property type="entry name" value="P-loop containing nucleoside triphosphate hydrolases"/>
    <property type="match status" value="1"/>
</dbReference>
<dbReference type="PROSITE" id="PS00675">
    <property type="entry name" value="SIGMA54_INTERACT_1"/>
    <property type="match status" value="1"/>
</dbReference>
<dbReference type="PROSITE" id="PS00676">
    <property type="entry name" value="SIGMA54_INTERACT_2"/>
    <property type="match status" value="1"/>
</dbReference>
<dbReference type="PROSITE" id="PS00688">
    <property type="entry name" value="SIGMA54_INTERACT_3"/>
    <property type="match status" value="1"/>
</dbReference>
<dbReference type="PROSITE" id="PS50045">
    <property type="entry name" value="SIGMA54_INTERACT_4"/>
    <property type="match status" value="1"/>
</dbReference>
<protein>
    <recommendedName>
        <fullName>Nif-specific regulatory protein</fullName>
    </recommendedName>
</protein>
<sequence length="615" mass="66794">MPMTDAFQVRVPRVSSSTAGDIAASSITTRGALPRPGGMPVSMSRGTSPEVALIGVYEISKILTAPRRLEVTLANVVNVLSSMLQMRHGMICILDSEGDPDMVATTGWTPEMAGQIRAHVPQKAIDQIVATQMPLVVQDVTADPLFAGHEDLFGPPEEATVSFIGVPIKADHHVMGTLSIDRIWDGTARFRFDEDVRFLTMVANLVGQTVRLHKLVASDRDRLIAQTHRLEKALREEKSGAEPEVAEAANGSAMGIVGDSPLVKRLIATAQVVARSNSTVLLRGESGTGKELFARAIHELSPRKGKPFVKVNCAALPESVLESELFGHEKGAFTGALNMRQGRFELAHGGTLFLDEIGEITPAFQAKLLRVLQEGEFERVGGNRTLKVDVRLVCATNKNLEEAVSKGEFRADLYYRIHVVPLILPPLRERPGDIPKLAKNFLDRFNKENKLHMMLSAPAIDVLRRCYFPGNVRELENCIRRTATLAHDAVITPHDFACDSGQCLSAMLWKGSAPKPVMPHVPPAPTPLTPLSPAPLATAAPAAASPAPAADSLPVTCPGTEACPAVPPRQSEKEQLLQAMERSGWVQAKAARLLNLTPRQVGYALRKYDIDIKRF</sequence>
<feature type="chain" id="PRO_0000081301" description="Nif-specific regulatory protein">
    <location>
        <begin position="1"/>
        <end position="615"/>
    </location>
</feature>
<feature type="domain" description="GAF">
    <location>
        <begin position="68"/>
        <end position="210"/>
    </location>
</feature>
<feature type="domain" description="Sigma-54 factor interaction" evidence="3">
    <location>
        <begin position="256"/>
        <end position="484"/>
    </location>
</feature>
<feature type="DNA-binding region" description="H-T-H motif" evidence="1">
    <location>
        <begin position="587"/>
        <end position="606"/>
    </location>
</feature>
<feature type="region of interest" description="Inter-domain linker">
    <location>
        <begin position="485"/>
        <end position="572"/>
    </location>
</feature>
<feature type="region of interest" description="C-terminal DNA-binding domain">
    <location>
        <begin position="573"/>
        <end position="615"/>
    </location>
</feature>
<feature type="binding site" evidence="3">
    <location>
        <begin position="284"/>
        <end position="291"/>
    </location>
    <ligand>
        <name>ATP</name>
        <dbReference type="ChEBI" id="CHEBI:30616"/>
    </ligand>
</feature>
<feature type="binding site" evidence="3">
    <location>
        <begin position="347"/>
        <end position="356"/>
    </location>
    <ligand>
        <name>ATP</name>
        <dbReference type="ChEBI" id="CHEBI:30616"/>
    </ligand>
</feature>
<feature type="binding site" evidence="2">
    <location>
        <position position="498"/>
    </location>
    <ligand>
        <name>a divalent metal cation</name>
        <dbReference type="ChEBI" id="CHEBI:60240"/>
    </ligand>
</feature>
<feature type="binding site" evidence="2">
    <location>
        <position position="503"/>
    </location>
    <ligand>
        <name>a divalent metal cation</name>
        <dbReference type="ChEBI" id="CHEBI:60240"/>
    </ligand>
</feature>
<gene>
    <name type="primary">nifA</name>
    <name type="ordered locus">AZC_1049</name>
</gene>